<proteinExistence type="inferred from homology"/>
<name>COXX_WOLPP</name>
<keyword id="KW-1003">Cell membrane</keyword>
<keyword id="KW-0350">Heme biosynthesis</keyword>
<keyword id="KW-0472">Membrane</keyword>
<keyword id="KW-0808">Transferase</keyword>
<keyword id="KW-0812">Transmembrane</keyword>
<keyword id="KW-1133">Transmembrane helix</keyword>
<evidence type="ECO:0000255" key="1">
    <source>
        <dbReference type="HAMAP-Rule" id="MF_00154"/>
    </source>
</evidence>
<protein>
    <recommendedName>
        <fullName evidence="1">Protoheme IX farnesyltransferase</fullName>
        <ecNumber evidence="1">2.5.1.141</ecNumber>
    </recommendedName>
    <alternativeName>
        <fullName evidence="1">Heme B farnesyltransferase</fullName>
    </alternativeName>
    <alternativeName>
        <fullName evidence="1">Heme O synthase</fullName>
    </alternativeName>
</protein>
<organism>
    <name type="scientific">Wolbachia pipientis subsp. Culex pipiens (strain wPip)</name>
    <dbReference type="NCBI Taxonomy" id="570417"/>
    <lineage>
        <taxon>Bacteria</taxon>
        <taxon>Pseudomonadati</taxon>
        <taxon>Pseudomonadota</taxon>
        <taxon>Alphaproteobacteria</taxon>
        <taxon>Rickettsiales</taxon>
        <taxon>Anaplasmataceae</taxon>
        <taxon>Wolbachieae</taxon>
        <taxon>Wolbachia</taxon>
    </lineage>
</organism>
<feature type="chain" id="PRO_1000096928" description="Protoheme IX farnesyltransferase">
    <location>
        <begin position="1"/>
        <end position="295"/>
    </location>
</feature>
<feature type="transmembrane region" description="Helical" evidence="1">
    <location>
        <begin position="27"/>
        <end position="47"/>
    </location>
</feature>
<feature type="transmembrane region" description="Helical" evidence="1">
    <location>
        <begin position="48"/>
        <end position="68"/>
    </location>
</feature>
<feature type="transmembrane region" description="Helical" evidence="1">
    <location>
        <begin position="94"/>
        <end position="114"/>
    </location>
</feature>
<feature type="transmembrane region" description="Helical" evidence="1">
    <location>
        <begin position="117"/>
        <end position="137"/>
    </location>
</feature>
<feature type="transmembrane region" description="Helical" evidence="1">
    <location>
        <begin position="144"/>
        <end position="164"/>
    </location>
</feature>
<feature type="transmembrane region" description="Helical" evidence="1">
    <location>
        <begin position="171"/>
        <end position="191"/>
    </location>
</feature>
<feature type="transmembrane region" description="Helical" evidence="1">
    <location>
        <begin position="216"/>
        <end position="236"/>
    </location>
</feature>
<feature type="transmembrane region" description="Helical" evidence="1">
    <location>
        <begin position="241"/>
        <end position="261"/>
    </location>
</feature>
<feature type="transmembrane region" description="Helical" evidence="1">
    <location>
        <begin position="272"/>
        <end position="292"/>
    </location>
</feature>
<reference key="1">
    <citation type="journal article" date="2008" name="Mol. Biol. Evol.">
        <title>Genome evolution of Wolbachia strain wPip from the Culex pipiens group.</title>
        <authorList>
            <person name="Klasson L."/>
            <person name="Walker T."/>
            <person name="Sebaihia M."/>
            <person name="Sanders M.J."/>
            <person name="Quail M.A."/>
            <person name="Lord A."/>
            <person name="Sanders S."/>
            <person name="Earl J."/>
            <person name="O'Neill S.L."/>
            <person name="Thomson N."/>
            <person name="Sinkins S.P."/>
            <person name="Parkhill J."/>
        </authorList>
    </citation>
    <scope>NUCLEOTIDE SEQUENCE [LARGE SCALE GENOMIC DNA]</scope>
    <source>
        <strain>wPip</strain>
    </source>
</reference>
<dbReference type="EC" id="2.5.1.141" evidence="1"/>
<dbReference type="EMBL" id="AM999887">
    <property type="protein sequence ID" value="CAQ54190.1"/>
    <property type="molecule type" value="Genomic_DNA"/>
</dbReference>
<dbReference type="RefSeq" id="WP_007302763.1">
    <property type="nucleotide sequence ID" value="NC_010981.1"/>
</dbReference>
<dbReference type="SMR" id="B3CN58"/>
<dbReference type="KEGG" id="wpi:WP0081"/>
<dbReference type="eggNOG" id="COG0109">
    <property type="taxonomic scope" value="Bacteria"/>
</dbReference>
<dbReference type="HOGENOM" id="CLU_029631_0_2_5"/>
<dbReference type="UniPathway" id="UPA00834">
    <property type="reaction ID" value="UER00712"/>
</dbReference>
<dbReference type="Proteomes" id="UP000008814">
    <property type="component" value="Chromosome"/>
</dbReference>
<dbReference type="GO" id="GO:0005886">
    <property type="term" value="C:plasma membrane"/>
    <property type="evidence" value="ECO:0007669"/>
    <property type="project" value="UniProtKB-SubCell"/>
</dbReference>
<dbReference type="GO" id="GO:0008495">
    <property type="term" value="F:protoheme IX farnesyltransferase activity"/>
    <property type="evidence" value="ECO:0007669"/>
    <property type="project" value="UniProtKB-UniRule"/>
</dbReference>
<dbReference type="GO" id="GO:0048034">
    <property type="term" value="P:heme O biosynthetic process"/>
    <property type="evidence" value="ECO:0007669"/>
    <property type="project" value="UniProtKB-UniRule"/>
</dbReference>
<dbReference type="CDD" id="cd13957">
    <property type="entry name" value="PT_UbiA_Cox10"/>
    <property type="match status" value="1"/>
</dbReference>
<dbReference type="Gene3D" id="1.10.357.140">
    <property type="entry name" value="UbiA prenyltransferase"/>
    <property type="match status" value="1"/>
</dbReference>
<dbReference type="HAMAP" id="MF_00154">
    <property type="entry name" value="CyoE_CtaB"/>
    <property type="match status" value="1"/>
</dbReference>
<dbReference type="InterPro" id="IPR006369">
    <property type="entry name" value="Protohaem_IX_farnesylTrfase"/>
</dbReference>
<dbReference type="InterPro" id="IPR000537">
    <property type="entry name" value="UbiA_prenyltransferase"/>
</dbReference>
<dbReference type="InterPro" id="IPR030470">
    <property type="entry name" value="UbiA_prenylTrfase_CS"/>
</dbReference>
<dbReference type="InterPro" id="IPR044878">
    <property type="entry name" value="UbiA_sf"/>
</dbReference>
<dbReference type="NCBIfam" id="TIGR01473">
    <property type="entry name" value="cyoE_ctaB"/>
    <property type="match status" value="1"/>
</dbReference>
<dbReference type="NCBIfam" id="NF003349">
    <property type="entry name" value="PRK04375.1-2"/>
    <property type="match status" value="1"/>
</dbReference>
<dbReference type="PANTHER" id="PTHR43448:SF7">
    <property type="entry name" value="4-HYDROXYBENZOATE SOLANESYLTRANSFERASE"/>
    <property type="match status" value="1"/>
</dbReference>
<dbReference type="PANTHER" id="PTHR43448">
    <property type="entry name" value="PROTOHEME IX FARNESYLTRANSFERASE, MITOCHONDRIAL"/>
    <property type="match status" value="1"/>
</dbReference>
<dbReference type="Pfam" id="PF01040">
    <property type="entry name" value="UbiA"/>
    <property type="match status" value="1"/>
</dbReference>
<dbReference type="PROSITE" id="PS00943">
    <property type="entry name" value="UBIA"/>
    <property type="match status" value="1"/>
</dbReference>
<sequence>MYISALLNVESTILDFWHLLKPRIMYLVVFTAIAGMVAAPGSIHPFLALISLMCIALGSGSAGAINMWYDRDIDLVMERTKNRPIPSGRVFAESALEFGITIGILSVFIMAIAVNYISAALLAVSILFYVFVYTIWLKRRTPQNIVIGGAAGAFPPMIGWAVVTDSVSWESFILFLIIFMWTPPHFWALSLNRSEDYVKASIPMFNVIHGPKKTRKHILIYSILLVLTSLLPALFLKKSLFYLSMAIIEGCVFIWFAISVIRLKNHSSQKKMFSYSISYLFSLFASIIFCSIDLF</sequence>
<comment type="function">
    <text evidence="1">Converts heme B (protoheme IX) to heme O by substitution of the vinyl group on carbon 2 of heme B porphyrin ring with a hydroxyethyl farnesyl side group.</text>
</comment>
<comment type="catalytic activity">
    <reaction evidence="1">
        <text>heme b + (2E,6E)-farnesyl diphosphate + H2O = Fe(II)-heme o + diphosphate</text>
        <dbReference type="Rhea" id="RHEA:28070"/>
        <dbReference type="ChEBI" id="CHEBI:15377"/>
        <dbReference type="ChEBI" id="CHEBI:33019"/>
        <dbReference type="ChEBI" id="CHEBI:60344"/>
        <dbReference type="ChEBI" id="CHEBI:60530"/>
        <dbReference type="ChEBI" id="CHEBI:175763"/>
        <dbReference type="EC" id="2.5.1.141"/>
    </reaction>
</comment>
<comment type="pathway">
    <text evidence="1">Porphyrin-containing compound metabolism; heme O biosynthesis; heme O from protoheme: step 1/1.</text>
</comment>
<comment type="subcellular location">
    <subcellularLocation>
        <location evidence="1">Cell membrane</location>
        <topology evidence="1">Multi-pass membrane protein</topology>
    </subcellularLocation>
</comment>
<comment type="miscellaneous">
    <text evidence="1">Carbon 2 of the heme B porphyrin ring is defined according to the Fischer nomenclature.</text>
</comment>
<comment type="similarity">
    <text evidence="1">Belongs to the UbiA prenyltransferase family. Protoheme IX farnesyltransferase subfamily.</text>
</comment>
<accession>B3CN58</accession>
<gene>
    <name evidence="1" type="primary">ctaB</name>
    <name type="ordered locus">WP0081</name>
</gene>